<reference key="1">
    <citation type="submission" date="2008-10" db="EMBL/GenBank/DDBJ databases">
        <title>Genome sequence of Bacillus anthracis str. CDC 684.</title>
        <authorList>
            <person name="Dodson R.J."/>
            <person name="Munk A.C."/>
            <person name="Brettin T."/>
            <person name="Bruce D."/>
            <person name="Detter C."/>
            <person name="Tapia R."/>
            <person name="Han C."/>
            <person name="Sutton G."/>
            <person name="Sims D."/>
        </authorList>
    </citation>
    <scope>NUCLEOTIDE SEQUENCE [LARGE SCALE GENOMIC DNA]</scope>
    <source>
        <strain>CDC 684 / NRRL 3495</strain>
    </source>
</reference>
<proteinExistence type="inferred from homology"/>
<keyword id="KW-1003">Cell membrane</keyword>
<keyword id="KW-0472">Membrane</keyword>
<keyword id="KW-0808">Transferase</keyword>
<keyword id="KW-0812">Transmembrane</keyword>
<keyword id="KW-1133">Transmembrane helix</keyword>
<name>LGT_BACAC</name>
<sequence>MLLGSVPQLDRVAVQLGPFPVYWYGIIIGTGVLLGLWLATREGERLGIPKDTFVDLVLIAVPIAILFARMYYVIFEWEYYAQNPSQIINIRQGGLAIHGGLIGAVVTGILFAKRRGVSFWKLADIAAPSILLGQAIGRWGNFMNQEAHGDEVTRQFLEGLHLPDFIINQMYIDGVYYHPTFLYESLWNFAGVILLLALRKVNLRRGELFFTYLIWYSIGRFFVEGLRTDSLMLGPLRIAQVMSIGLVVISIIFIIVRRKMGQADKRYSEN</sequence>
<feature type="chain" id="PRO_1000164123" description="Phosphatidylglycerol--prolipoprotein diacylglyceryl transferase">
    <location>
        <begin position="1"/>
        <end position="270"/>
    </location>
</feature>
<feature type="transmembrane region" description="Helical" evidence="1">
    <location>
        <begin position="19"/>
        <end position="39"/>
    </location>
</feature>
<feature type="transmembrane region" description="Helical" evidence="1">
    <location>
        <begin position="56"/>
        <end position="76"/>
    </location>
</feature>
<feature type="transmembrane region" description="Helical" evidence="1">
    <location>
        <begin position="92"/>
        <end position="112"/>
    </location>
</feature>
<feature type="transmembrane region" description="Helical" evidence="1">
    <location>
        <begin position="116"/>
        <end position="136"/>
    </location>
</feature>
<feature type="transmembrane region" description="Helical" evidence="1">
    <location>
        <begin position="178"/>
        <end position="198"/>
    </location>
</feature>
<feature type="transmembrane region" description="Helical" evidence="1">
    <location>
        <begin position="206"/>
        <end position="226"/>
    </location>
</feature>
<feature type="transmembrane region" description="Helical" evidence="1">
    <location>
        <begin position="236"/>
        <end position="256"/>
    </location>
</feature>
<feature type="binding site" evidence="1">
    <location>
        <position position="138"/>
    </location>
    <ligand>
        <name>a 1,2-diacyl-sn-glycero-3-phospho-(1'-sn-glycerol)</name>
        <dbReference type="ChEBI" id="CHEBI:64716"/>
    </ligand>
</feature>
<comment type="function">
    <text evidence="1">Catalyzes the transfer of the diacylglyceryl group from phosphatidylglycerol to the sulfhydryl group of the N-terminal cysteine of a prolipoprotein, the first step in the formation of mature lipoproteins.</text>
</comment>
<comment type="catalytic activity">
    <reaction evidence="1">
        <text>L-cysteinyl-[prolipoprotein] + a 1,2-diacyl-sn-glycero-3-phospho-(1'-sn-glycerol) = an S-1,2-diacyl-sn-glyceryl-L-cysteinyl-[prolipoprotein] + sn-glycerol 1-phosphate + H(+)</text>
        <dbReference type="Rhea" id="RHEA:56712"/>
        <dbReference type="Rhea" id="RHEA-COMP:14679"/>
        <dbReference type="Rhea" id="RHEA-COMP:14680"/>
        <dbReference type="ChEBI" id="CHEBI:15378"/>
        <dbReference type="ChEBI" id="CHEBI:29950"/>
        <dbReference type="ChEBI" id="CHEBI:57685"/>
        <dbReference type="ChEBI" id="CHEBI:64716"/>
        <dbReference type="ChEBI" id="CHEBI:140658"/>
        <dbReference type="EC" id="2.5.1.145"/>
    </reaction>
</comment>
<comment type="pathway">
    <text evidence="1">Protein modification; lipoprotein biosynthesis (diacylglyceryl transfer).</text>
</comment>
<comment type="subcellular location">
    <subcellularLocation>
        <location evidence="1">Cell membrane</location>
        <topology evidence="1">Multi-pass membrane protein</topology>
    </subcellularLocation>
</comment>
<comment type="similarity">
    <text evidence="1">Belongs to the Lgt family.</text>
</comment>
<accession>C3LED1</accession>
<organism>
    <name type="scientific">Bacillus anthracis (strain CDC 684 / NRRL 3495)</name>
    <dbReference type="NCBI Taxonomy" id="568206"/>
    <lineage>
        <taxon>Bacteria</taxon>
        <taxon>Bacillati</taxon>
        <taxon>Bacillota</taxon>
        <taxon>Bacilli</taxon>
        <taxon>Bacillales</taxon>
        <taxon>Bacillaceae</taxon>
        <taxon>Bacillus</taxon>
        <taxon>Bacillus cereus group</taxon>
    </lineage>
</organism>
<dbReference type="EC" id="2.5.1.145" evidence="1"/>
<dbReference type="EMBL" id="CP001215">
    <property type="protein sequence ID" value="ACP13592.1"/>
    <property type="molecule type" value="Genomic_DNA"/>
</dbReference>
<dbReference type="RefSeq" id="WP_000924244.1">
    <property type="nucleotide sequence ID" value="NC_012581.1"/>
</dbReference>
<dbReference type="SMR" id="C3LED1"/>
<dbReference type="GeneID" id="45024994"/>
<dbReference type="KEGG" id="bah:BAMEG_5444"/>
<dbReference type="HOGENOM" id="CLU_013386_1_2_9"/>
<dbReference type="UniPathway" id="UPA00664"/>
<dbReference type="GO" id="GO:0005886">
    <property type="term" value="C:plasma membrane"/>
    <property type="evidence" value="ECO:0007669"/>
    <property type="project" value="UniProtKB-SubCell"/>
</dbReference>
<dbReference type="GO" id="GO:0008961">
    <property type="term" value="F:phosphatidylglycerol-prolipoprotein diacylglyceryl transferase activity"/>
    <property type="evidence" value="ECO:0007669"/>
    <property type="project" value="UniProtKB-UniRule"/>
</dbReference>
<dbReference type="GO" id="GO:0042158">
    <property type="term" value="P:lipoprotein biosynthetic process"/>
    <property type="evidence" value="ECO:0007669"/>
    <property type="project" value="UniProtKB-UniRule"/>
</dbReference>
<dbReference type="HAMAP" id="MF_01147">
    <property type="entry name" value="Lgt"/>
    <property type="match status" value="1"/>
</dbReference>
<dbReference type="InterPro" id="IPR001640">
    <property type="entry name" value="Lgt"/>
</dbReference>
<dbReference type="NCBIfam" id="TIGR00544">
    <property type="entry name" value="lgt"/>
    <property type="match status" value="1"/>
</dbReference>
<dbReference type="PANTHER" id="PTHR30589:SF0">
    <property type="entry name" value="PHOSPHATIDYLGLYCEROL--PROLIPOPROTEIN DIACYLGLYCERYL TRANSFERASE"/>
    <property type="match status" value="1"/>
</dbReference>
<dbReference type="PANTHER" id="PTHR30589">
    <property type="entry name" value="PROLIPOPROTEIN DIACYLGLYCERYL TRANSFERASE"/>
    <property type="match status" value="1"/>
</dbReference>
<dbReference type="Pfam" id="PF01790">
    <property type="entry name" value="LGT"/>
    <property type="match status" value="1"/>
</dbReference>
<dbReference type="PROSITE" id="PS01311">
    <property type="entry name" value="LGT"/>
    <property type="match status" value="1"/>
</dbReference>
<protein>
    <recommendedName>
        <fullName evidence="1">Phosphatidylglycerol--prolipoprotein diacylglyceryl transferase</fullName>
        <ecNumber evidence="1">2.5.1.145</ecNumber>
    </recommendedName>
</protein>
<evidence type="ECO:0000255" key="1">
    <source>
        <dbReference type="HAMAP-Rule" id="MF_01147"/>
    </source>
</evidence>
<gene>
    <name evidence="1" type="primary">lgt</name>
    <name type="ordered locus">BAMEG_5444</name>
</gene>